<protein>
    <recommendedName>
        <fullName evidence="1">ATP synthase subunit delta</fullName>
    </recommendedName>
    <alternativeName>
        <fullName evidence="1">ATP synthase F(1) sector subunit delta</fullName>
    </alternativeName>
    <alternativeName>
        <fullName evidence="1">F-type ATPase subunit delta</fullName>
        <shortName evidence="1">F-ATPase subunit delta</shortName>
    </alternativeName>
</protein>
<reference key="1">
    <citation type="submission" date="2006-10" db="EMBL/GenBank/DDBJ databases">
        <title>Complete sequence of Syntrophobacter fumaroxidans MPOB.</title>
        <authorList>
            <consortium name="US DOE Joint Genome Institute"/>
            <person name="Copeland A."/>
            <person name="Lucas S."/>
            <person name="Lapidus A."/>
            <person name="Barry K."/>
            <person name="Detter J.C."/>
            <person name="Glavina del Rio T."/>
            <person name="Hammon N."/>
            <person name="Israni S."/>
            <person name="Pitluck S."/>
            <person name="Goltsman E.G."/>
            <person name="Martinez M."/>
            <person name="Schmutz J."/>
            <person name="Larimer F."/>
            <person name="Land M."/>
            <person name="Hauser L."/>
            <person name="Kyrpides N."/>
            <person name="Kim E."/>
            <person name="Boone D.R."/>
            <person name="Brockman F."/>
            <person name="Culley D."/>
            <person name="Ferry J."/>
            <person name="Gunsalus R."/>
            <person name="McInerney M.J."/>
            <person name="Morrison M."/>
            <person name="Plugge C."/>
            <person name="Rohlin L."/>
            <person name="Scholten J."/>
            <person name="Sieber J."/>
            <person name="Stams A.J.M."/>
            <person name="Worm P."/>
            <person name="Henstra A.M."/>
            <person name="Richardson P."/>
        </authorList>
    </citation>
    <scope>NUCLEOTIDE SEQUENCE [LARGE SCALE GENOMIC DNA]</scope>
    <source>
        <strain>DSM 10017 / MPOB</strain>
    </source>
</reference>
<keyword id="KW-0066">ATP synthesis</keyword>
<keyword id="KW-0997">Cell inner membrane</keyword>
<keyword id="KW-1003">Cell membrane</keyword>
<keyword id="KW-0139">CF(1)</keyword>
<keyword id="KW-0375">Hydrogen ion transport</keyword>
<keyword id="KW-0406">Ion transport</keyword>
<keyword id="KW-0472">Membrane</keyword>
<keyword id="KW-1185">Reference proteome</keyword>
<keyword id="KW-0813">Transport</keyword>
<name>ATPD_SYNFM</name>
<accession>A0LLG1</accession>
<dbReference type="EMBL" id="CP000478">
    <property type="protein sequence ID" value="ABK18263.1"/>
    <property type="molecule type" value="Genomic_DNA"/>
</dbReference>
<dbReference type="RefSeq" id="WP_011699431.1">
    <property type="nucleotide sequence ID" value="NC_008554.1"/>
</dbReference>
<dbReference type="SMR" id="A0LLG1"/>
<dbReference type="FunCoup" id="A0LLG1">
    <property type="interactions" value="361"/>
</dbReference>
<dbReference type="STRING" id="335543.Sfum_2585"/>
<dbReference type="KEGG" id="sfu:Sfum_2585"/>
<dbReference type="eggNOG" id="COG0712">
    <property type="taxonomic scope" value="Bacteria"/>
</dbReference>
<dbReference type="HOGENOM" id="CLU_085114_1_1_7"/>
<dbReference type="InParanoid" id="A0LLG1"/>
<dbReference type="OrthoDB" id="9802471at2"/>
<dbReference type="Proteomes" id="UP000001784">
    <property type="component" value="Chromosome"/>
</dbReference>
<dbReference type="GO" id="GO:0005886">
    <property type="term" value="C:plasma membrane"/>
    <property type="evidence" value="ECO:0007669"/>
    <property type="project" value="UniProtKB-SubCell"/>
</dbReference>
<dbReference type="GO" id="GO:0045259">
    <property type="term" value="C:proton-transporting ATP synthase complex"/>
    <property type="evidence" value="ECO:0007669"/>
    <property type="project" value="UniProtKB-KW"/>
</dbReference>
<dbReference type="GO" id="GO:0046933">
    <property type="term" value="F:proton-transporting ATP synthase activity, rotational mechanism"/>
    <property type="evidence" value="ECO:0007669"/>
    <property type="project" value="UniProtKB-UniRule"/>
</dbReference>
<dbReference type="Gene3D" id="1.10.520.20">
    <property type="entry name" value="N-terminal domain of the delta subunit of the F1F0-ATP synthase"/>
    <property type="match status" value="1"/>
</dbReference>
<dbReference type="HAMAP" id="MF_01416">
    <property type="entry name" value="ATP_synth_delta_bact"/>
    <property type="match status" value="1"/>
</dbReference>
<dbReference type="InterPro" id="IPR026015">
    <property type="entry name" value="ATP_synth_OSCP/delta_N_sf"/>
</dbReference>
<dbReference type="InterPro" id="IPR000711">
    <property type="entry name" value="ATPase_OSCP/dsu"/>
</dbReference>
<dbReference type="NCBIfam" id="TIGR01145">
    <property type="entry name" value="ATP_synt_delta"/>
    <property type="match status" value="1"/>
</dbReference>
<dbReference type="PANTHER" id="PTHR11910">
    <property type="entry name" value="ATP SYNTHASE DELTA CHAIN"/>
    <property type="match status" value="1"/>
</dbReference>
<dbReference type="Pfam" id="PF00213">
    <property type="entry name" value="OSCP"/>
    <property type="match status" value="1"/>
</dbReference>
<dbReference type="PRINTS" id="PR00125">
    <property type="entry name" value="ATPASEDELTA"/>
</dbReference>
<dbReference type="SUPFAM" id="SSF47928">
    <property type="entry name" value="N-terminal domain of the delta subunit of the F1F0-ATP synthase"/>
    <property type="match status" value="1"/>
</dbReference>
<feature type="chain" id="PRO_0000371182" description="ATP synthase subunit delta">
    <location>
        <begin position="1"/>
        <end position="183"/>
    </location>
</feature>
<evidence type="ECO:0000255" key="1">
    <source>
        <dbReference type="HAMAP-Rule" id="MF_01416"/>
    </source>
</evidence>
<sequence>MKNLIIAKRYSKALFNLAEEGRMIEQYGEELDNFVRLLGKLPELADALRNPLFPEATRKAIFAAVAEQLALTPIVRSFINLLIVKKRVEHLESIAQYYHRLIDEYSNVARAQVKAAIDLDEKVIQEIAKTLEKMTGKKIVVEFQKDPSLIGGVLAQIGDFVLDGSVKRQLLNFKETLKRGALG</sequence>
<gene>
    <name evidence="1" type="primary">atpH</name>
    <name type="ordered locus">Sfum_2585</name>
</gene>
<comment type="function">
    <text evidence="1">F(1)F(0) ATP synthase produces ATP from ADP in the presence of a proton or sodium gradient. F-type ATPases consist of two structural domains, F(1) containing the extramembraneous catalytic core and F(0) containing the membrane proton channel, linked together by a central stalk and a peripheral stalk. During catalysis, ATP synthesis in the catalytic domain of F(1) is coupled via a rotary mechanism of the central stalk subunits to proton translocation.</text>
</comment>
<comment type="function">
    <text evidence="1">This protein is part of the stalk that links CF(0) to CF(1). It either transmits conformational changes from CF(0) to CF(1) or is implicated in proton conduction.</text>
</comment>
<comment type="subunit">
    <text evidence="1">F-type ATPases have 2 components, F(1) - the catalytic core - and F(0) - the membrane proton channel. F(1) has five subunits: alpha(3), beta(3), gamma(1), delta(1), epsilon(1). F(0) has three main subunits: a(1), b(2) and c(10-14). The alpha and beta chains form an alternating ring which encloses part of the gamma chain. F(1) is attached to F(0) by a central stalk formed by the gamma and epsilon chains, while a peripheral stalk is formed by the delta and b chains.</text>
</comment>
<comment type="subcellular location">
    <subcellularLocation>
        <location evidence="1">Cell inner membrane</location>
        <topology evidence="1">Peripheral membrane protein</topology>
    </subcellularLocation>
</comment>
<comment type="similarity">
    <text evidence="1">Belongs to the ATPase delta chain family.</text>
</comment>
<proteinExistence type="inferred from homology"/>
<organism>
    <name type="scientific">Syntrophobacter fumaroxidans (strain DSM 10017 / MPOB)</name>
    <dbReference type="NCBI Taxonomy" id="335543"/>
    <lineage>
        <taxon>Bacteria</taxon>
        <taxon>Pseudomonadati</taxon>
        <taxon>Thermodesulfobacteriota</taxon>
        <taxon>Syntrophobacteria</taxon>
        <taxon>Syntrophobacterales</taxon>
        <taxon>Syntrophobacteraceae</taxon>
        <taxon>Syntrophobacter</taxon>
    </lineage>
</organism>